<keyword id="KW-0134">Cell wall</keyword>
<keyword id="KW-0536">Nodulation</keyword>
<keyword id="KW-0677">Repeat</keyword>
<keyword id="KW-0964">Secreted</keyword>
<keyword id="KW-0732">Signal</keyword>
<evidence type="ECO:0000250" key="1"/>
<evidence type="ECO:0000255" key="2"/>
<evidence type="ECO:0000256" key="3">
    <source>
        <dbReference type="SAM" id="MobiDB-lite"/>
    </source>
</evidence>
<evidence type="ECO:0000305" key="4"/>
<comment type="function">
    <text evidence="1">Involved in the infection process during the plant-rhizobium interaction.</text>
</comment>
<comment type="subcellular location">
    <subcellularLocation>
        <location evidence="1">Secreted</location>
        <location evidence="1">Cell wall</location>
    </subcellularLocation>
</comment>
<comment type="tissue specificity">
    <text>Expressed only in young nodules.</text>
</comment>
<comment type="similarity">
    <text evidence="4">Belongs to the plant proline-rich protein superfamily. ENOD12 family.</text>
</comment>
<organism>
    <name type="scientific">Medicago sativa</name>
    <name type="common">Alfalfa</name>
    <dbReference type="NCBI Taxonomy" id="3879"/>
    <lineage>
        <taxon>Eukaryota</taxon>
        <taxon>Viridiplantae</taxon>
        <taxon>Streptophyta</taxon>
        <taxon>Embryophyta</taxon>
        <taxon>Tracheophyta</taxon>
        <taxon>Spermatophyta</taxon>
        <taxon>Magnoliopsida</taxon>
        <taxon>eudicotyledons</taxon>
        <taxon>Gunneridae</taxon>
        <taxon>Pentapetalae</taxon>
        <taxon>rosids</taxon>
        <taxon>fabids</taxon>
        <taxon>Fabales</taxon>
        <taxon>Fabaceae</taxon>
        <taxon>Papilionoideae</taxon>
        <taxon>50 kb inversion clade</taxon>
        <taxon>NPAAA clade</taxon>
        <taxon>Hologalegina</taxon>
        <taxon>IRL clade</taxon>
        <taxon>Trifolieae</taxon>
        <taxon>Medicago</taxon>
    </lineage>
</organism>
<protein>
    <recommendedName>
        <fullName>Early nodulin-12B</fullName>
        <shortName>N-12B</shortName>
    </recommendedName>
</protein>
<proteinExistence type="evidence at transcript level"/>
<gene>
    <name type="primary">ENOD12B</name>
</gene>
<dbReference type="EMBL" id="X67507">
    <property type="protein sequence ID" value="CAA47844.1"/>
    <property type="molecule type" value="Genomic_DNA"/>
</dbReference>
<dbReference type="EMBL" id="X74355">
    <property type="protein sequence ID" value="CAA52397.1"/>
    <property type="molecule type" value="Genomic_DNA"/>
</dbReference>
<dbReference type="PIR" id="S31076">
    <property type="entry name" value="S31076"/>
</dbReference>
<dbReference type="SMR" id="Q40339"/>
<dbReference type="GO" id="GO:0005576">
    <property type="term" value="C:extracellular region"/>
    <property type="evidence" value="ECO:0007669"/>
    <property type="project" value="UniProtKB-KW"/>
</dbReference>
<dbReference type="GO" id="GO:0009877">
    <property type="term" value="P:nodulation"/>
    <property type="evidence" value="ECO:0007669"/>
    <property type="project" value="UniProtKB-KW"/>
</dbReference>
<dbReference type="InterPro" id="IPR051308">
    <property type="entry name" value="Proline-rich_CW_protein"/>
</dbReference>
<dbReference type="PANTHER" id="PTHR34629">
    <property type="entry name" value="PROLINE-RICH EXTENSIN-LIKE PROTEIN EPR1"/>
    <property type="match status" value="1"/>
</dbReference>
<dbReference type="PANTHER" id="PTHR34629:SF4">
    <property type="entry name" value="REPETITIVE PROLINE-RICH CELL WALL PROTEIN 3"/>
    <property type="match status" value="1"/>
</dbReference>
<name>NO12B_MEDSA</name>
<feature type="signal peptide" evidence="2">
    <location>
        <begin position="1"/>
        <end position="24"/>
    </location>
</feature>
<feature type="chain" id="PRO_0000019802" description="Early nodulin-12B">
    <location>
        <begin position="25"/>
        <end position="113"/>
    </location>
</feature>
<feature type="repeat" description="1">
    <location>
        <begin position="34"/>
        <end position="38"/>
    </location>
</feature>
<feature type="repeat" description="2">
    <location>
        <begin position="39"/>
        <end position="43"/>
    </location>
</feature>
<feature type="repeat" description="3; approximate">
    <location>
        <begin position="44"/>
        <end position="48"/>
    </location>
</feature>
<feature type="repeat" description="4">
    <location>
        <begin position="49"/>
        <end position="53"/>
    </location>
</feature>
<feature type="repeat" description="5">
    <location>
        <begin position="54"/>
        <end position="58"/>
    </location>
</feature>
<feature type="repeat" description="6">
    <location>
        <begin position="59"/>
        <end position="63"/>
    </location>
</feature>
<feature type="repeat" description="7; approximate">
    <location>
        <begin position="64"/>
        <end position="68"/>
    </location>
</feature>
<feature type="repeat" description="8">
    <location>
        <begin position="69"/>
        <end position="73"/>
    </location>
</feature>
<feature type="repeat" description="9">
    <location>
        <begin position="74"/>
        <end position="78"/>
    </location>
</feature>
<feature type="repeat" description="10">
    <location>
        <begin position="79"/>
        <end position="83"/>
    </location>
</feature>
<feature type="repeat" description="11">
    <location>
        <begin position="84"/>
        <end position="88"/>
    </location>
</feature>
<feature type="repeat" description="12; approximate">
    <location>
        <begin position="89"/>
        <end position="93"/>
    </location>
</feature>
<feature type="repeat" description="13">
    <location>
        <begin position="94"/>
        <end position="98"/>
    </location>
</feature>
<feature type="repeat" description="14">
    <location>
        <begin position="99"/>
        <end position="103"/>
    </location>
</feature>
<feature type="repeat" description="15">
    <location>
        <begin position="105"/>
        <end position="109"/>
    </location>
</feature>
<feature type="region of interest" description="Disordered" evidence="3">
    <location>
        <begin position="29"/>
        <end position="113"/>
    </location>
</feature>
<feature type="region of interest" description="15 X 5 AA approximate tandem repeats of P-P-[QVHRTA]-[NHKE]-[KEDT]">
    <location>
        <begin position="34"/>
        <end position="109"/>
    </location>
</feature>
<feature type="compositionally biased region" description="Pro residues" evidence="3">
    <location>
        <begin position="32"/>
        <end position="42"/>
    </location>
</feature>
<feature type="compositionally biased region" description="Basic and acidic residues" evidence="3">
    <location>
        <begin position="45"/>
        <end position="60"/>
    </location>
</feature>
<feature type="compositionally biased region" description="Basic and acidic residues" evidence="3">
    <location>
        <begin position="67"/>
        <end position="113"/>
    </location>
</feature>
<feature type="sequence variant" description="In strain: cv. Coerula W2.">
    <original>K</original>
    <variation>R</variation>
    <location>
        <position position="87"/>
    </location>
</feature>
<feature type="sequence variant" description="In strain: cv. Coerula W2.">
    <original>A</original>
    <variation>S</variation>
    <location>
        <position position="107"/>
    </location>
</feature>
<accession>Q40339</accession>
<accession>Q40342</accession>
<reference key="1">
    <citation type="journal article" date="1993" name="Plant Mol. Biol.">
        <title>Identification of two alfalfa early nodulin genes with homology to members of the pea Enod12 gene family.</title>
        <authorList>
            <person name="Allison L.A."/>
            <person name="Kiss G.B."/>
            <person name="Bauer P."/>
            <person name="Poiret M."/>
            <person name="Pierre M."/>
            <person name="Savoure A."/>
            <person name="Kondorosi E."/>
            <person name="Kondorosi A."/>
        </authorList>
    </citation>
    <scope>NUCLEOTIDE SEQUENCE [GENOMIC DNA]</scope>
    <source>
        <strain>cv. Nagyszenasi</strain>
    </source>
</reference>
<reference key="2">
    <citation type="journal article" date="1994" name="Plant Cell">
        <title>ENOD12, an early nodulin gene, is not required for nodule formation and efficient nitrogen fixation in alfalfa.</title>
        <authorList>
            <person name="Csanadi G."/>
            <person name="Szecsi J."/>
            <person name="Kalo P."/>
            <person name="Kiss P."/>
            <person name="Endre G."/>
            <person name="Kondorosi A."/>
            <person name="Kondorosi E."/>
            <person name="Kiss G.B."/>
        </authorList>
    </citation>
    <scope>NUCLEOTIDE SEQUENCE [GENOMIC DNA] OF 15-113</scope>
    <source>
        <strain>cv. Coerula W2</strain>
    </source>
</reference>
<sequence length="113" mass="12849">MASFSLSILVFFISALVLVPQGFAEYYLNPAYRPPQTKPPVNKPSHKEPPVHKPPHKEPPVNKPRHKEPPVHKPPHKDPPVNKPPQKESPVHKPPRKEPPTHKHPPAEDNIHF</sequence>